<dbReference type="EC" id="3.1.1.-"/>
<dbReference type="EMBL" id="AB017059">
    <property type="protein sequence ID" value="BAB10579.1"/>
    <property type="molecule type" value="Genomic_DNA"/>
</dbReference>
<dbReference type="EMBL" id="CP002688">
    <property type="protein sequence ID" value="AED96573.1"/>
    <property type="molecule type" value="Genomic_DNA"/>
</dbReference>
<dbReference type="EMBL" id="AY072081">
    <property type="protein sequence ID" value="AAL59904.1"/>
    <property type="molecule type" value="mRNA"/>
</dbReference>
<dbReference type="EMBL" id="AY142585">
    <property type="protein sequence ID" value="AAN13154.1"/>
    <property type="molecule type" value="mRNA"/>
</dbReference>
<dbReference type="RefSeq" id="NP_200316.1">
    <property type="nucleotide sequence ID" value="NM_124887.5"/>
</dbReference>
<dbReference type="SMR" id="Q9FIA1"/>
<dbReference type="FunCoup" id="Q9FIA1">
    <property type="interactions" value="107"/>
</dbReference>
<dbReference type="STRING" id="3702.Q9FIA1"/>
<dbReference type="GlyGen" id="Q9FIA1">
    <property type="glycosylation" value="3 sites"/>
</dbReference>
<dbReference type="PaxDb" id="3702-AT5G55050.1"/>
<dbReference type="ProteomicsDB" id="247113"/>
<dbReference type="EnsemblPlants" id="AT5G55050.1">
    <property type="protein sequence ID" value="AT5G55050.1"/>
    <property type="gene ID" value="AT5G55050"/>
</dbReference>
<dbReference type="GeneID" id="835596"/>
<dbReference type="Gramene" id="AT5G55050.1">
    <property type="protein sequence ID" value="AT5G55050.1"/>
    <property type="gene ID" value="AT5G55050"/>
</dbReference>
<dbReference type="KEGG" id="ath:AT5G55050"/>
<dbReference type="Araport" id="AT5G55050"/>
<dbReference type="TAIR" id="AT5G55050"/>
<dbReference type="eggNOG" id="KOG0017">
    <property type="taxonomic scope" value="Eukaryota"/>
</dbReference>
<dbReference type="HOGENOM" id="CLU_015101_0_2_1"/>
<dbReference type="InParanoid" id="Q9FIA1"/>
<dbReference type="OMA" id="ANHRHYG"/>
<dbReference type="PhylomeDB" id="Q9FIA1"/>
<dbReference type="BioCyc" id="ARA:AT5G55050-MONOMER"/>
<dbReference type="PRO" id="PR:Q9FIA1"/>
<dbReference type="Proteomes" id="UP000006548">
    <property type="component" value="Chromosome 5"/>
</dbReference>
<dbReference type="ExpressionAtlas" id="Q9FIA1">
    <property type="expression patterns" value="baseline and differential"/>
</dbReference>
<dbReference type="GO" id="GO:0005576">
    <property type="term" value="C:extracellular region"/>
    <property type="evidence" value="ECO:0007669"/>
    <property type="project" value="UniProtKB-SubCell"/>
</dbReference>
<dbReference type="GO" id="GO:0009536">
    <property type="term" value="C:plastid"/>
    <property type="evidence" value="ECO:0007005"/>
    <property type="project" value="TAIR"/>
</dbReference>
<dbReference type="GO" id="GO:0016298">
    <property type="term" value="F:lipase activity"/>
    <property type="evidence" value="ECO:0007669"/>
    <property type="project" value="InterPro"/>
</dbReference>
<dbReference type="GO" id="GO:0016042">
    <property type="term" value="P:lipid catabolic process"/>
    <property type="evidence" value="ECO:0007669"/>
    <property type="project" value="UniProtKB-KW"/>
</dbReference>
<dbReference type="CDD" id="cd01837">
    <property type="entry name" value="SGNH_plant_lipase_like"/>
    <property type="match status" value="1"/>
</dbReference>
<dbReference type="Gene3D" id="3.40.50.1110">
    <property type="entry name" value="SGNH hydrolase"/>
    <property type="match status" value="1"/>
</dbReference>
<dbReference type="InterPro" id="IPR001087">
    <property type="entry name" value="GDSL"/>
</dbReference>
<dbReference type="InterPro" id="IPR051058">
    <property type="entry name" value="GDSL_Est/Lipase"/>
</dbReference>
<dbReference type="InterPro" id="IPR008265">
    <property type="entry name" value="Lipase_GDSL_AS"/>
</dbReference>
<dbReference type="InterPro" id="IPR036514">
    <property type="entry name" value="SGNH_hydro_sf"/>
</dbReference>
<dbReference type="InterPro" id="IPR035669">
    <property type="entry name" value="SGNH_plant_lipase-like"/>
</dbReference>
<dbReference type="PANTHER" id="PTHR45648:SF106">
    <property type="entry name" value="ANTHER-SPECIFIC PROLINE-RICH PROTEIN APG"/>
    <property type="match status" value="1"/>
</dbReference>
<dbReference type="PANTHER" id="PTHR45648">
    <property type="entry name" value="GDSL LIPASE/ACYLHYDROLASE FAMILY PROTEIN (AFU_ORTHOLOGUE AFUA_4G14700)"/>
    <property type="match status" value="1"/>
</dbReference>
<dbReference type="Pfam" id="PF00657">
    <property type="entry name" value="Lipase_GDSL"/>
    <property type="match status" value="1"/>
</dbReference>
<dbReference type="SUPFAM" id="SSF52266">
    <property type="entry name" value="SGNH hydrolase"/>
    <property type="match status" value="1"/>
</dbReference>
<dbReference type="PROSITE" id="PS01098">
    <property type="entry name" value="LIPASE_GDSL_SER"/>
    <property type="match status" value="1"/>
</dbReference>
<sequence>MPTNNTPFLTIFLLFLGLLRFDSFPGLEAATGKLASIPGLYVFGDSLVDAGNNNYLPISISKANYPHNGVDFPNKKPTGRFCNGKNAADAIAEKFGLPLPPPYLSLRGLLKREKRKSAAVTGVNFASGGAGIFNSSDQKLGQAIPLSKQVNNWLSIHEEVMKLEPSAAQLHLSKSLFTVVIGSNDLFDYFGSFKLRRQSNPQQYTQLMADKLKEQLKRIHDSGARRFLIIGVAQIGCTPGKRAKNSTLHECDEGANMWCSLYNEALVKMLQQLKQELQGSITYTYFDNYKSLHDIISNPARYGFADVTSACCGNGELNADLPCLPLAKLCSDRTKHLFWDRYGHPTEAAARTIVDLMLTDDTHYSSPITLTQLVST</sequence>
<evidence type="ECO:0000250" key="1"/>
<evidence type="ECO:0000255" key="2"/>
<evidence type="ECO:0000305" key="3"/>
<protein>
    <recommendedName>
        <fullName>GDSL esterase/lipase At5g55050</fullName>
        <ecNumber>3.1.1.-</ecNumber>
    </recommendedName>
    <alternativeName>
        <fullName>Extracellular lipase At5g55050</fullName>
    </alternativeName>
</protein>
<gene>
    <name type="ordered locus">At5g55050</name>
    <name type="ORF">K13P22.5</name>
</gene>
<name>GDL87_ARATH</name>
<organism>
    <name type="scientific">Arabidopsis thaliana</name>
    <name type="common">Mouse-ear cress</name>
    <dbReference type="NCBI Taxonomy" id="3702"/>
    <lineage>
        <taxon>Eukaryota</taxon>
        <taxon>Viridiplantae</taxon>
        <taxon>Streptophyta</taxon>
        <taxon>Embryophyta</taxon>
        <taxon>Tracheophyta</taxon>
        <taxon>Spermatophyta</taxon>
        <taxon>Magnoliopsida</taxon>
        <taxon>eudicotyledons</taxon>
        <taxon>Gunneridae</taxon>
        <taxon>Pentapetalae</taxon>
        <taxon>rosids</taxon>
        <taxon>malvids</taxon>
        <taxon>Brassicales</taxon>
        <taxon>Brassicaceae</taxon>
        <taxon>Camelineae</taxon>
        <taxon>Arabidopsis</taxon>
    </lineage>
</organism>
<comment type="subcellular location">
    <subcellularLocation>
        <location evidence="3">Secreted</location>
    </subcellularLocation>
</comment>
<comment type="similarity">
    <text evidence="3">Belongs to the 'GDSL' lipolytic enzyme family.</text>
</comment>
<accession>Q9FIA1</accession>
<proteinExistence type="evidence at transcript level"/>
<reference key="1">
    <citation type="journal article" date="1999" name="DNA Res.">
        <title>Structural analysis of Arabidopsis thaliana chromosome 5. IX. Sequence features of the regions of 1,011,550 bp covered by seventeen P1 and TAC clones.</title>
        <authorList>
            <person name="Kaneko T."/>
            <person name="Katoh T."/>
            <person name="Sato S."/>
            <person name="Nakamura Y."/>
            <person name="Asamizu E."/>
            <person name="Kotani H."/>
            <person name="Miyajima N."/>
            <person name="Tabata S."/>
        </authorList>
    </citation>
    <scope>NUCLEOTIDE SEQUENCE [LARGE SCALE GENOMIC DNA]</scope>
    <source>
        <strain>cv. Columbia</strain>
    </source>
</reference>
<reference key="2">
    <citation type="journal article" date="2017" name="Plant J.">
        <title>Araport11: a complete reannotation of the Arabidopsis thaliana reference genome.</title>
        <authorList>
            <person name="Cheng C.Y."/>
            <person name="Krishnakumar V."/>
            <person name="Chan A.P."/>
            <person name="Thibaud-Nissen F."/>
            <person name="Schobel S."/>
            <person name="Town C.D."/>
        </authorList>
    </citation>
    <scope>GENOME REANNOTATION</scope>
    <source>
        <strain>cv. Columbia</strain>
    </source>
</reference>
<reference key="3">
    <citation type="journal article" date="2003" name="Science">
        <title>Empirical analysis of transcriptional activity in the Arabidopsis genome.</title>
        <authorList>
            <person name="Yamada K."/>
            <person name="Lim J."/>
            <person name="Dale J.M."/>
            <person name="Chen H."/>
            <person name="Shinn P."/>
            <person name="Palm C.J."/>
            <person name="Southwick A.M."/>
            <person name="Wu H.C."/>
            <person name="Kim C.J."/>
            <person name="Nguyen M."/>
            <person name="Pham P.K."/>
            <person name="Cheuk R.F."/>
            <person name="Karlin-Newmann G."/>
            <person name="Liu S.X."/>
            <person name="Lam B."/>
            <person name="Sakano H."/>
            <person name="Wu T."/>
            <person name="Yu G."/>
            <person name="Miranda M."/>
            <person name="Quach H.L."/>
            <person name="Tripp M."/>
            <person name="Chang C.H."/>
            <person name="Lee J.M."/>
            <person name="Toriumi M.J."/>
            <person name="Chan M.M."/>
            <person name="Tang C.C."/>
            <person name="Onodera C.S."/>
            <person name="Deng J.M."/>
            <person name="Akiyama K."/>
            <person name="Ansari Y."/>
            <person name="Arakawa T."/>
            <person name="Banh J."/>
            <person name="Banno F."/>
            <person name="Bowser L."/>
            <person name="Brooks S.Y."/>
            <person name="Carninci P."/>
            <person name="Chao Q."/>
            <person name="Choy N."/>
            <person name="Enju A."/>
            <person name="Goldsmith A.D."/>
            <person name="Gurjal M."/>
            <person name="Hansen N.F."/>
            <person name="Hayashizaki Y."/>
            <person name="Johnson-Hopson C."/>
            <person name="Hsuan V.W."/>
            <person name="Iida K."/>
            <person name="Karnes M."/>
            <person name="Khan S."/>
            <person name="Koesema E."/>
            <person name="Ishida J."/>
            <person name="Jiang P.X."/>
            <person name="Jones T."/>
            <person name="Kawai J."/>
            <person name="Kamiya A."/>
            <person name="Meyers C."/>
            <person name="Nakajima M."/>
            <person name="Narusaka M."/>
            <person name="Seki M."/>
            <person name="Sakurai T."/>
            <person name="Satou M."/>
            <person name="Tamse R."/>
            <person name="Vaysberg M."/>
            <person name="Wallender E.K."/>
            <person name="Wong C."/>
            <person name="Yamamura Y."/>
            <person name="Yuan S."/>
            <person name="Shinozaki K."/>
            <person name="Davis R.W."/>
            <person name="Theologis A."/>
            <person name="Ecker J.R."/>
        </authorList>
    </citation>
    <scope>NUCLEOTIDE SEQUENCE [LARGE SCALE MRNA]</scope>
    <source>
        <strain>cv. Columbia</strain>
    </source>
</reference>
<reference key="4">
    <citation type="journal article" date="2004" name="Prog. Lipid Res.">
        <title>GDSL family of serine esterases/lipases.</title>
        <authorList>
            <person name="Akoh C.C."/>
            <person name="Lee G.-C."/>
            <person name="Liaw Y.-C."/>
            <person name="Huang T.-H."/>
            <person name="Shaw J.-F."/>
        </authorList>
    </citation>
    <scope>REVIEW</scope>
</reference>
<reference key="5">
    <citation type="journal article" date="2008" name="Pak. J. Biol. Sci.">
        <title>Sequence analysis of GDSL lipase gene family in Arabidopsis thaliana.</title>
        <authorList>
            <person name="Ling H."/>
        </authorList>
    </citation>
    <scope>GENE FAMILY</scope>
</reference>
<feature type="signal peptide" evidence="2">
    <location>
        <begin position="1"/>
        <end position="29"/>
    </location>
</feature>
<feature type="chain" id="PRO_0000367427" description="GDSL esterase/lipase At5g55050">
    <location>
        <begin position="30"/>
        <end position="376"/>
    </location>
</feature>
<feature type="active site" description="Nucleophile" evidence="1">
    <location>
        <position position="46"/>
    </location>
</feature>
<feature type="active site" evidence="1">
    <location>
        <position position="340"/>
    </location>
</feature>
<feature type="active site" evidence="1">
    <location>
        <position position="344"/>
    </location>
</feature>
<feature type="glycosylation site" description="N-linked (GlcNAc...) asparagine" evidence="2">
    <location>
        <position position="134"/>
    </location>
</feature>
<feature type="glycosylation site" description="N-linked (GlcNAc...) asparagine" evidence="2">
    <location>
        <position position="245"/>
    </location>
</feature>
<keyword id="KW-0325">Glycoprotein</keyword>
<keyword id="KW-0378">Hydrolase</keyword>
<keyword id="KW-0442">Lipid degradation</keyword>
<keyword id="KW-0443">Lipid metabolism</keyword>
<keyword id="KW-1185">Reference proteome</keyword>
<keyword id="KW-0964">Secreted</keyword>
<keyword id="KW-0732">Signal</keyword>